<gene>
    <name evidence="1" type="primary">thiM</name>
    <name type="ordered locus">VIBHAR_06843</name>
</gene>
<feature type="chain" id="PRO_1000021539" description="Hydroxyethylthiazole kinase">
    <location>
        <begin position="1"/>
        <end position="263"/>
    </location>
</feature>
<feature type="binding site" evidence="1">
    <location>
        <position position="45"/>
    </location>
    <ligand>
        <name>substrate</name>
    </ligand>
</feature>
<feature type="binding site" evidence="1">
    <location>
        <position position="121"/>
    </location>
    <ligand>
        <name>ATP</name>
        <dbReference type="ChEBI" id="CHEBI:30616"/>
    </ligand>
</feature>
<feature type="binding site" evidence="1">
    <location>
        <position position="167"/>
    </location>
    <ligand>
        <name>ATP</name>
        <dbReference type="ChEBI" id="CHEBI:30616"/>
    </ligand>
</feature>
<feature type="binding site" evidence="1">
    <location>
        <position position="194"/>
    </location>
    <ligand>
        <name>substrate</name>
    </ligand>
</feature>
<comment type="function">
    <text evidence="1">Catalyzes the phosphorylation of the hydroxyl group of 4-methyl-5-beta-hydroxyethylthiazole (THZ).</text>
</comment>
<comment type="catalytic activity">
    <reaction evidence="1">
        <text>5-(2-hydroxyethyl)-4-methylthiazole + ATP = 4-methyl-5-(2-phosphooxyethyl)-thiazole + ADP + H(+)</text>
        <dbReference type="Rhea" id="RHEA:24212"/>
        <dbReference type="ChEBI" id="CHEBI:15378"/>
        <dbReference type="ChEBI" id="CHEBI:17957"/>
        <dbReference type="ChEBI" id="CHEBI:30616"/>
        <dbReference type="ChEBI" id="CHEBI:58296"/>
        <dbReference type="ChEBI" id="CHEBI:456216"/>
        <dbReference type="EC" id="2.7.1.50"/>
    </reaction>
</comment>
<comment type="cofactor">
    <cofactor evidence="1">
        <name>Mg(2+)</name>
        <dbReference type="ChEBI" id="CHEBI:18420"/>
    </cofactor>
</comment>
<comment type="pathway">
    <text evidence="1">Cofactor biosynthesis; thiamine diphosphate biosynthesis; 4-methyl-5-(2-phosphoethyl)-thiazole from 5-(2-hydroxyethyl)-4-methylthiazole: step 1/1.</text>
</comment>
<comment type="similarity">
    <text evidence="1">Belongs to the Thz kinase family.</text>
</comment>
<proteinExistence type="inferred from homology"/>
<dbReference type="EC" id="2.7.1.50" evidence="1"/>
<dbReference type="EMBL" id="CP000790">
    <property type="protein sequence ID" value="ABU74718.1"/>
    <property type="molecule type" value="Genomic_DNA"/>
</dbReference>
<dbReference type="RefSeq" id="WP_012130198.1">
    <property type="nucleotide sequence ID" value="NC_009784.1"/>
</dbReference>
<dbReference type="SMR" id="A7N7S2"/>
<dbReference type="KEGG" id="vha:VIBHAR_06843"/>
<dbReference type="PATRIC" id="fig|338187.25.peg.3599"/>
<dbReference type="UniPathway" id="UPA00060">
    <property type="reaction ID" value="UER00139"/>
</dbReference>
<dbReference type="Proteomes" id="UP000008152">
    <property type="component" value="Chromosome II"/>
</dbReference>
<dbReference type="GO" id="GO:0005524">
    <property type="term" value="F:ATP binding"/>
    <property type="evidence" value="ECO:0007669"/>
    <property type="project" value="UniProtKB-UniRule"/>
</dbReference>
<dbReference type="GO" id="GO:0004417">
    <property type="term" value="F:hydroxyethylthiazole kinase activity"/>
    <property type="evidence" value="ECO:0007669"/>
    <property type="project" value="UniProtKB-UniRule"/>
</dbReference>
<dbReference type="GO" id="GO:0000287">
    <property type="term" value="F:magnesium ion binding"/>
    <property type="evidence" value="ECO:0007669"/>
    <property type="project" value="UniProtKB-UniRule"/>
</dbReference>
<dbReference type="GO" id="GO:0009228">
    <property type="term" value="P:thiamine biosynthetic process"/>
    <property type="evidence" value="ECO:0007669"/>
    <property type="project" value="UniProtKB-KW"/>
</dbReference>
<dbReference type="GO" id="GO:0009229">
    <property type="term" value="P:thiamine diphosphate biosynthetic process"/>
    <property type="evidence" value="ECO:0007669"/>
    <property type="project" value="UniProtKB-UniRule"/>
</dbReference>
<dbReference type="CDD" id="cd01170">
    <property type="entry name" value="THZ_kinase"/>
    <property type="match status" value="1"/>
</dbReference>
<dbReference type="Gene3D" id="3.40.1190.20">
    <property type="match status" value="1"/>
</dbReference>
<dbReference type="HAMAP" id="MF_00228">
    <property type="entry name" value="Thz_kinase"/>
    <property type="match status" value="1"/>
</dbReference>
<dbReference type="InterPro" id="IPR000417">
    <property type="entry name" value="Hyethyz_kinase"/>
</dbReference>
<dbReference type="InterPro" id="IPR029056">
    <property type="entry name" value="Ribokinase-like"/>
</dbReference>
<dbReference type="NCBIfam" id="NF006830">
    <property type="entry name" value="PRK09355.1"/>
    <property type="match status" value="1"/>
</dbReference>
<dbReference type="Pfam" id="PF02110">
    <property type="entry name" value="HK"/>
    <property type="match status" value="1"/>
</dbReference>
<dbReference type="PIRSF" id="PIRSF000513">
    <property type="entry name" value="Thz_kinase"/>
    <property type="match status" value="1"/>
</dbReference>
<dbReference type="PRINTS" id="PR01099">
    <property type="entry name" value="HYETHTZKNASE"/>
</dbReference>
<dbReference type="SUPFAM" id="SSF53613">
    <property type="entry name" value="Ribokinase-like"/>
    <property type="match status" value="1"/>
</dbReference>
<accession>A7N7S2</accession>
<keyword id="KW-0067">ATP-binding</keyword>
<keyword id="KW-0418">Kinase</keyword>
<keyword id="KW-0460">Magnesium</keyword>
<keyword id="KW-0479">Metal-binding</keyword>
<keyword id="KW-0547">Nucleotide-binding</keyword>
<keyword id="KW-0784">Thiamine biosynthesis</keyword>
<keyword id="KW-0808">Transferase</keyword>
<sequence>MLIEQITQALTAVRQQKPLVVNITNYVVMNNTANALLAIGASPIMAHSKQEMVEMMSFAGALVINIGTLDSVWTPRMSYAVEQANANGKIVVLDPVGCGASSLRTETSREIARLADKLIIRGNASEIIALAGEQAQSKGVDALDSSDAALGAANFLVAEYGASVVISGETDYIVTKGQTVQLNNGHEMMPYVTGMGCTLSALTGAFAAVGDDTGLAAAAVLGVVGEIAAEQARGPGSLQMNLLDELYQLDEETLAKRLKMQVS</sequence>
<protein>
    <recommendedName>
        <fullName evidence="1">Hydroxyethylthiazole kinase</fullName>
        <ecNumber evidence="1">2.7.1.50</ecNumber>
    </recommendedName>
    <alternativeName>
        <fullName evidence="1">4-methyl-5-beta-hydroxyethylthiazole kinase</fullName>
        <shortName evidence="1">TH kinase</shortName>
        <shortName evidence="1">Thz kinase</shortName>
    </alternativeName>
</protein>
<name>THIM_VIBC1</name>
<reference key="1">
    <citation type="submission" date="2007-08" db="EMBL/GenBank/DDBJ databases">
        <authorList>
            <consortium name="The Vibrio harveyi Genome Sequencing Project"/>
            <person name="Bassler B."/>
            <person name="Clifton S.W."/>
            <person name="Fulton L."/>
            <person name="Delehaunty K."/>
            <person name="Fronick C."/>
            <person name="Harrison M."/>
            <person name="Markivic C."/>
            <person name="Fulton R."/>
            <person name="Tin-Wollam A.-M."/>
            <person name="Shah N."/>
            <person name="Pepin K."/>
            <person name="Nash W."/>
            <person name="Thiruvilangam P."/>
            <person name="Bhonagiri V."/>
            <person name="Waters C."/>
            <person name="Tu K.C."/>
            <person name="Irgon J."/>
            <person name="Wilson R.K."/>
        </authorList>
    </citation>
    <scope>NUCLEOTIDE SEQUENCE [LARGE SCALE GENOMIC DNA]</scope>
    <source>
        <strain>ATCC BAA-1116 / BB120</strain>
    </source>
</reference>
<organism>
    <name type="scientific">Vibrio campbellii (strain ATCC BAA-1116)</name>
    <dbReference type="NCBI Taxonomy" id="2902295"/>
    <lineage>
        <taxon>Bacteria</taxon>
        <taxon>Pseudomonadati</taxon>
        <taxon>Pseudomonadota</taxon>
        <taxon>Gammaproteobacteria</taxon>
        <taxon>Vibrionales</taxon>
        <taxon>Vibrionaceae</taxon>
        <taxon>Vibrio</taxon>
    </lineage>
</organism>
<evidence type="ECO:0000255" key="1">
    <source>
        <dbReference type="HAMAP-Rule" id="MF_00228"/>
    </source>
</evidence>